<feature type="chain" id="PRO_0000256143" description="Branchpoint-bridging protein">
    <location>
        <begin position="1"/>
        <end position="507"/>
    </location>
</feature>
<feature type="domain" description="KH" evidence="3">
    <location>
        <begin position="154"/>
        <end position="220"/>
    </location>
</feature>
<feature type="zinc finger region" description="CCHC-type 1" evidence="2">
    <location>
        <begin position="272"/>
        <end position="289"/>
    </location>
</feature>
<feature type="zinc finger region" description="CCHC-type 2" evidence="2">
    <location>
        <begin position="297"/>
        <end position="314"/>
    </location>
</feature>
<feature type="region of interest" description="Disordered" evidence="4">
    <location>
        <begin position="84"/>
        <end position="110"/>
    </location>
</feature>
<feature type="region of interest" description="Disordered" evidence="4">
    <location>
        <begin position="307"/>
        <end position="507"/>
    </location>
</feature>
<feature type="compositionally biased region" description="Polar residues" evidence="4">
    <location>
        <begin position="84"/>
        <end position="93"/>
    </location>
</feature>
<feature type="compositionally biased region" description="Basic and acidic residues" evidence="4">
    <location>
        <begin position="319"/>
        <end position="336"/>
    </location>
</feature>
<feature type="compositionally biased region" description="Low complexity" evidence="4">
    <location>
        <begin position="345"/>
        <end position="376"/>
    </location>
</feature>
<feature type="compositionally biased region" description="Pro residues" evidence="4">
    <location>
        <begin position="390"/>
        <end position="412"/>
    </location>
</feature>
<feature type="compositionally biased region" description="Pro residues" evidence="4">
    <location>
        <begin position="440"/>
        <end position="449"/>
    </location>
</feature>
<feature type="compositionally biased region" description="Low complexity" evidence="4">
    <location>
        <begin position="450"/>
        <end position="469"/>
    </location>
</feature>
<feature type="compositionally biased region" description="Pro residues" evidence="4">
    <location>
        <begin position="484"/>
        <end position="507"/>
    </location>
</feature>
<organism>
    <name type="scientific">Eremothecium gossypii (strain ATCC 10895 / CBS 109.51 / FGSC 9923 / NRRL Y-1056)</name>
    <name type="common">Yeast</name>
    <name type="synonym">Ashbya gossypii</name>
    <dbReference type="NCBI Taxonomy" id="284811"/>
    <lineage>
        <taxon>Eukaryota</taxon>
        <taxon>Fungi</taxon>
        <taxon>Dikarya</taxon>
        <taxon>Ascomycota</taxon>
        <taxon>Saccharomycotina</taxon>
        <taxon>Saccharomycetes</taxon>
        <taxon>Saccharomycetales</taxon>
        <taxon>Saccharomycetaceae</taxon>
        <taxon>Eremothecium</taxon>
    </lineage>
</organism>
<sequence>MTRLVWFCMQVAYCLHGWDWDIMDRGRSSNSYDSLWGGKARDNPIVSQLPLQYRIRSALTQEQQTAYQVMYRIQEITIKLRTNDLNPPTSRYRSLSPPPVYDSQGKRTNTREHRYRKKLEEERHRLVEIALKMIPHFIAPDDYRRPSKFQDKYYIPINDYPEINFVGLLLGPRGNTLKQLQQQSGCKIVIRGRGSVKEGKAATDLPKGAMNMNEPLHCVISADTEEKIPLGINAVESIIIKAITSPEGQNDLKRGQLRELAVLNGTLREDNRPCPLCGEQGHKKWECSSNPSLSMTVICQRCNQPGHAARDCTSPLNEFGKRTSDGPEFRETKKLQQDAPPPSGPVGSHPSAPGSGSANSGVAPASLHPPGTMAPPGALPPPGSLAAPGTLPPPAALPAPAAPGTLPPPVALPAPATLPQAGVPPAPDASPAVKTAVPIEGPPAPPQTAPPLRQTAATASSAGSSQSAQEEPENARNGVEKAAPGPPAAVLPPPPPPPPPPPPPPSS</sequence>
<accession>Q750X2</accession>
<keyword id="KW-0479">Metal-binding</keyword>
<keyword id="KW-0507">mRNA processing</keyword>
<keyword id="KW-0508">mRNA splicing</keyword>
<keyword id="KW-0539">Nucleus</keyword>
<keyword id="KW-1185">Reference proteome</keyword>
<keyword id="KW-0677">Repeat</keyword>
<keyword id="KW-0694">RNA-binding</keyword>
<keyword id="KW-0747">Spliceosome</keyword>
<keyword id="KW-0862">Zinc</keyword>
<keyword id="KW-0863">Zinc-finger</keyword>
<dbReference type="EMBL" id="AE016820">
    <property type="protein sequence ID" value="AAS54308.2"/>
    <property type="molecule type" value="Genomic_DNA"/>
</dbReference>
<dbReference type="RefSeq" id="NP_986484.2">
    <property type="nucleotide sequence ID" value="NM_211546.2"/>
</dbReference>
<dbReference type="SMR" id="Q750X2"/>
<dbReference type="FunCoup" id="Q750X2">
    <property type="interactions" value="58"/>
</dbReference>
<dbReference type="STRING" id="284811.Q750X2"/>
<dbReference type="EnsemblFungi" id="AAS54308">
    <property type="protein sequence ID" value="AAS54308"/>
    <property type="gene ID" value="AGOS_AGL183C"/>
</dbReference>
<dbReference type="GeneID" id="4622777"/>
<dbReference type="KEGG" id="ago:AGOS_AGL183C"/>
<dbReference type="eggNOG" id="KOG0119">
    <property type="taxonomic scope" value="Eukaryota"/>
</dbReference>
<dbReference type="HOGENOM" id="CLU_016864_5_1_1"/>
<dbReference type="InParanoid" id="Q750X2"/>
<dbReference type="OMA" id="EDSNCKI"/>
<dbReference type="OrthoDB" id="6777263at2759"/>
<dbReference type="Proteomes" id="UP000000591">
    <property type="component" value="Chromosome VII"/>
</dbReference>
<dbReference type="GO" id="GO:0000243">
    <property type="term" value="C:commitment complex"/>
    <property type="evidence" value="ECO:0007669"/>
    <property type="project" value="EnsemblFungi"/>
</dbReference>
<dbReference type="GO" id="GO:0005829">
    <property type="term" value="C:cytosol"/>
    <property type="evidence" value="ECO:0007669"/>
    <property type="project" value="EnsemblFungi"/>
</dbReference>
<dbReference type="GO" id="GO:0005634">
    <property type="term" value="C:nucleus"/>
    <property type="evidence" value="ECO:0000318"/>
    <property type="project" value="GO_Central"/>
</dbReference>
<dbReference type="GO" id="GO:0003729">
    <property type="term" value="F:mRNA binding"/>
    <property type="evidence" value="ECO:0000318"/>
    <property type="project" value="GO_Central"/>
</dbReference>
<dbReference type="GO" id="GO:0045131">
    <property type="term" value="F:pre-mRNA branch point binding"/>
    <property type="evidence" value="ECO:0007669"/>
    <property type="project" value="EnsemblFungi"/>
</dbReference>
<dbReference type="GO" id="GO:0008270">
    <property type="term" value="F:zinc ion binding"/>
    <property type="evidence" value="ECO:0007669"/>
    <property type="project" value="UniProtKB-KW"/>
</dbReference>
<dbReference type="GO" id="GO:0000398">
    <property type="term" value="P:mRNA splicing, via spliceosome"/>
    <property type="evidence" value="ECO:0007669"/>
    <property type="project" value="EnsemblFungi"/>
</dbReference>
<dbReference type="GO" id="GO:0048024">
    <property type="term" value="P:regulation of mRNA splicing, via spliceosome"/>
    <property type="evidence" value="ECO:0000318"/>
    <property type="project" value="GO_Central"/>
</dbReference>
<dbReference type="CDD" id="cd02395">
    <property type="entry name" value="KH-I_BBP"/>
    <property type="match status" value="1"/>
</dbReference>
<dbReference type="FunFam" id="3.30.1370.10:FF:000024">
    <property type="entry name" value="Branchpoint-bridging protein-like protein"/>
    <property type="match status" value="1"/>
</dbReference>
<dbReference type="Gene3D" id="6.10.140.1790">
    <property type="match status" value="1"/>
</dbReference>
<dbReference type="Gene3D" id="3.30.1370.10">
    <property type="entry name" value="K Homology domain, type 1"/>
    <property type="match status" value="1"/>
</dbReference>
<dbReference type="Gene3D" id="4.10.60.10">
    <property type="entry name" value="Zinc finger, CCHC-type"/>
    <property type="match status" value="1"/>
</dbReference>
<dbReference type="InterPro" id="IPR045071">
    <property type="entry name" value="BBP-like"/>
</dbReference>
<dbReference type="InterPro" id="IPR055256">
    <property type="entry name" value="KH_1_KHDC4/BBP-like"/>
</dbReference>
<dbReference type="InterPro" id="IPR004087">
    <property type="entry name" value="KH_dom"/>
</dbReference>
<dbReference type="InterPro" id="IPR036612">
    <property type="entry name" value="KH_dom_type_1_sf"/>
</dbReference>
<dbReference type="InterPro" id="IPR032570">
    <property type="entry name" value="SF1-HH"/>
</dbReference>
<dbReference type="InterPro" id="IPR047086">
    <property type="entry name" value="SF1-HH_sf"/>
</dbReference>
<dbReference type="InterPro" id="IPR001878">
    <property type="entry name" value="Znf_CCHC"/>
</dbReference>
<dbReference type="InterPro" id="IPR036875">
    <property type="entry name" value="Znf_CCHC_sf"/>
</dbReference>
<dbReference type="PANTHER" id="PTHR11208">
    <property type="entry name" value="RNA-BINDING PROTEIN RELATED"/>
    <property type="match status" value="1"/>
</dbReference>
<dbReference type="PANTHER" id="PTHR11208:SF45">
    <property type="entry name" value="SPLICING FACTOR 1"/>
    <property type="match status" value="1"/>
</dbReference>
<dbReference type="Pfam" id="PF22675">
    <property type="entry name" value="KH-I_KHDC4-BBP"/>
    <property type="match status" value="1"/>
</dbReference>
<dbReference type="Pfam" id="PF16275">
    <property type="entry name" value="SF1-HH"/>
    <property type="match status" value="1"/>
</dbReference>
<dbReference type="Pfam" id="PF00098">
    <property type="entry name" value="zf-CCHC"/>
    <property type="match status" value="1"/>
</dbReference>
<dbReference type="SMART" id="SM00322">
    <property type="entry name" value="KH"/>
    <property type="match status" value="1"/>
</dbReference>
<dbReference type="SMART" id="SM00343">
    <property type="entry name" value="ZnF_C2HC"/>
    <property type="match status" value="2"/>
</dbReference>
<dbReference type="SUPFAM" id="SSF54791">
    <property type="entry name" value="Eukaryotic type KH-domain (KH-domain type I)"/>
    <property type="match status" value="1"/>
</dbReference>
<dbReference type="SUPFAM" id="SSF57756">
    <property type="entry name" value="Retrovirus zinc finger-like domains"/>
    <property type="match status" value="1"/>
</dbReference>
<dbReference type="PROSITE" id="PS50084">
    <property type="entry name" value="KH_TYPE_1"/>
    <property type="match status" value="1"/>
</dbReference>
<dbReference type="PROSITE" id="PS50158">
    <property type="entry name" value="ZF_CCHC"/>
    <property type="match status" value="1"/>
</dbReference>
<reference key="1">
    <citation type="journal article" date="2004" name="Science">
        <title>The Ashbya gossypii genome as a tool for mapping the ancient Saccharomyces cerevisiae genome.</title>
        <authorList>
            <person name="Dietrich F.S."/>
            <person name="Voegeli S."/>
            <person name="Brachat S."/>
            <person name="Lerch A."/>
            <person name="Gates K."/>
            <person name="Steiner S."/>
            <person name="Mohr C."/>
            <person name="Poehlmann R."/>
            <person name="Luedi P."/>
            <person name="Choi S."/>
            <person name="Wing R.A."/>
            <person name="Flavier A."/>
            <person name="Gaffney T.D."/>
            <person name="Philippsen P."/>
        </authorList>
    </citation>
    <scope>NUCLEOTIDE SEQUENCE [LARGE SCALE GENOMIC DNA]</scope>
    <source>
        <strain>ATCC 10895 / CBS 109.51 / FGSC 9923 / NRRL Y-1056</strain>
    </source>
</reference>
<reference key="2">
    <citation type="journal article" date="2013" name="G3 (Bethesda)">
        <title>Genomes of Ashbya fungi isolated from insects reveal four mating-type loci, numerous translocations, lack of transposons, and distinct gene duplications.</title>
        <authorList>
            <person name="Dietrich F.S."/>
            <person name="Voegeli S."/>
            <person name="Kuo S."/>
            <person name="Philippsen P."/>
        </authorList>
    </citation>
    <scope>GENOME REANNOTATION</scope>
    <scope>SEQUENCE REVISION TO 235; 245 AND 252</scope>
    <source>
        <strain>ATCC 10895 / CBS 109.51 / FGSC 9923 / NRRL Y-1056</strain>
    </source>
</reference>
<protein>
    <recommendedName>
        <fullName>Branchpoint-bridging protein</fullName>
    </recommendedName>
</protein>
<name>BBP_EREGS</name>
<comment type="function">
    <text evidence="1">Necessary for the splicing of pre-mRNA. Has a role in the recognition of the branch site (5'-UACUAAC-3'), the pyrimidine tract and the 3'-splice site at the 3'-end of introns (By similarity).</text>
</comment>
<comment type="subcellular location">
    <subcellularLocation>
        <location evidence="1">Nucleus</location>
    </subcellularLocation>
</comment>
<comment type="similarity">
    <text evidence="5">Belongs to the BBP/SF1 family.</text>
</comment>
<evidence type="ECO:0000250" key="1"/>
<evidence type="ECO:0000255" key="2">
    <source>
        <dbReference type="PROSITE-ProRule" id="PRU00047"/>
    </source>
</evidence>
<evidence type="ECO:0000255" key="3">
    <source>
        <dbReference type="PROSITE-ProRule" id="PRU00117"/>
    </source>
</evidence>
<evidence type="ECO:0000256" key="4">
    <source>
        <dbReference type="SAM" id="MobiDB-lite"/>
    </source>
</evidence>
<evidence type="ECO:0000305" key="5"/>
<proteinExistence type="inferred from homology"/>
<gene>
    <name type="primary">BBP</name>
    <name type="ordered locus">AGL183C</name>
</gene>